<dbReference type="EMBL" id="AJ002551">
    <property type="protein sequence ID" value="CAA05547.1"/>
    <property type="molecule type" value="mRNA"/>
</dbReference>
<dbReference type="EMBL" id="AP002055">
    <property type="protein sequence ID" value="BAB02269.1"/>
    <property type="molecule type" value="Genomic_DNA"/>
</dbReference>
<dbReference type="EMBL" id="AC069474">
    <property type="protein sequence ID" value="AAG51030.1"/>
    <property type="molecule type" value="Genomic_DNA"/>
</dbReference>
<dbReference type="EMBL" id="CP002686">
    <property type="protein sequence ID" value="AEE75218.1"/>
    <property type="molecule type" value="Genomic_DNA"/>
</dbReference>
<dbReference type="EMBL" id="AY054183">
    <property type="protein sequence ID" value="AAL06844.1"/>
    <property type="molecule type" value="mRNA"/>
</dbReference>
<dbReference type="EMBL" id="AY054190">
    <property type="protein sequence ID" value="AAL06851.1"/>
    <property type="molecule type" value="mRNA"/>
</dbReference>
<dbReference type="EMBL" id="AY059885">
    <property type="protein sequence ID" value="AAL24367.1"/>
    <property type="molecule type" value="mRNA"/>
</dbReference>
<dbReference type="PIR" id="JA0171">
    <property type="entry name" value="JA0171"/>
</dbReference>
<dbReference type="RefSeq" id="NP_187864.1">
    <property type="nucleotide sequence ID" value="NM_112093.3"/>
</dbReference>
<dbReference type="SMR" id="Q9LHA8"/>
<dbReference type="BioGRID" id="5772">
    <property type="interactions" value="31"/>
</dbReference>
<dbReference type="FunCoup" id="Q9LHA8">
    <property type="interactions" value="2052"/>
</dbReference>
<dbReference type="IntAct" id="Q9LHA8">
    <property type="interactions" value="9"/>
</dbReference>
<dbReference type="MINT" id="Q9LHA8"/>
<dbReference type="STRING" id="3702.Q9LHA8"/>
<dbReference type="iPTMnet" id="Q9LHA8"/>
<dbReference type="MetOSite" id="Q9LHA8"/>
<dbReference type="PaxDb" id="3702-AT3G12580.1"/>
<dbReference type="ProteomicsDB" id="238330"/>
<dbReference type="EnsemblPlants" id="AT3G12580.1">
    <property type="protein sequence ID" value="AT3G12580.1"/>
    <property type="gene ID" value="AT3G12580"/>
</dbReference>
<dbReference type="GeneID" id="820438"/>
<dbReference type="Gramene" id="AT3G12580.1">
    <property type="protein sequence ID" value="AT3G12580.1"/>
    <property type="gene ID" value="AT3G12580"/>
</dbReference>
<dbReference type="KEGG" id="ath:AT3G12580"/>
<dbReference type="Araport" id="AT3G12580"/>
<dbReference type="TAIR" id="AT3G12580">
    <property type="gene designation" value="HSP70"/>
</dbReference>
<dbReference type="eggNOG" id="KOG0101">
    <property type="taxonomic scope" value="Eukaryota"/>
</dbReference>
<dbReference type="HOGENOM" id="CLU_005965_5_1_1"/>
<dbReference type="InParanoid" id="Q9LHA8"/>
<dbReference type="OMA" id="QADKSHW"/>
<dbReference type="OrthoDB" id="1082411at2759"/>
<dbReference type="PhylomeDB" id="Q9LHA8"/>
<dbReference type="CD-CODE" id="4299E36E">
    <property type="entry name" value="Nucleolus"/>
</dbReference>
<dbReference type="PRO" id="PR:Q9LHA8"/>
<dbReference type="Proteomes" id="UP000006548">
    <property type="component" value="Chromosome 3"/>
</dbReference>
<dbReference type="ExpressionAtlas" id="Q9LHA8">
    <property type="expression patterns" value="baseline and differential"/>
</dbReference>
<dbReference type="GO" id="GO:0005829">
    <property type="term" value="C:cytosol"/>
    <property type="evidence" value="ECO:0007005"/>
    <property type="project" value="TAIR"/>
</dbReference>
<dbReference type="GO" id="GO:0005794">
    <property type="term" value="C:Golgi apparatus"/>
    <property type="evidence" value="ECO:0007005"/>
    <property type="project" value="TAIR"/>
</dbReference>
<dbReference type="GO" id="GO:0005739">
    <property type="term" value="C:mitochondrion"/>
    <property type="evidence" value="ECO:0007005"/>
    <property type="project" value="TAIR"/>
</dbReference>
<dbReference type="GO" id="GO:0005634">
    <property type="term" value="C:nucleus"/>
    <property type="evidence" value="ECO:0007669"/>
    <property type="project" value="UniProtKB-SubCell"/>
</dbReference>
<dbReference type="GO" id="GO:0009505">
    <property type="term" value="C:plant-type cell wall"/>
    <property type="evidence" value="ECO:0007005"/>
    <property type="project" value="TAIR"/>
</dbReference>
<dbReference type="GO" id="GO:0000325">
    <property type="term" value="C:plant-type vacuole"/>
    <property type="evidence" value="ECO:0007005"/>
    <property type="project" value="TAIR"/>
</dbReference>
<dbReference type="GO" id="GO:0005886">
    <property type="term" value="C:plasma membrane"/>
    <property type="evidence" value="ECO:0007005"/>
    <property type="project" value="TAIR"/>
</dbReference>
<dbReference type="GO" id="GO:0005524">
    <property type="term" value="F:ATP binding"/>
    <property type="evidence" value="ECO:0007005"/>
    <property type="project" value="TAIR"/>
</dbReference>
<dbReference type="GO" id="GO:0140662">
    <property type="term" value="F:ATP-dependent protein folding chaperone"/>
    <property type="evidence" value="ECO:0007669"/>
    <property type="project" value="InterPro"/>
</dbReference>
<dbReference type="GO" id="GO:0031625">
    <property type="term" value="F:ubiquitin protein ligase binding"/>
    <property type="evidence" value="ECO:0000353"/>
    <property type="project" value="UniProtKB"/>
</dbReference>
<dbReference type="GO" id="GO:0016567">
    <property type="term" value="P:protein ubiquitination"/>
    <property type="evidence" value="ECO:0000315"/>
    <property type="project" value="UniProtKB"/>
</dbReference>
<dbReference type="GO" id="GO:0009617">
    <property type="term" value="P:response to bacterium"/>
    <property type="evidence" value="ECO:0000270"/>
    <property type="project" value="TAIR"/>
</dbReference>
<dbReference type="GO" id="GO:0009408">
    <property type="term" value="P:response to heat"/>
    <property type="evidence" value="ECO:0000270"/>
    <property type="project" value="UniProtKB"/>
</dbReference>
<dbReference type="GO" id="GO:0009266">
    <property type="term" value="P:response to temperature stimulus"/>
    <property type="evidence" value="ECO:0000270"/>
    <property type="project" value="TAIR"/>
</dbReference>
<dbReference type="GO" id="GO:0009615">
    <property type="term" value="P:response to virus"/>
    <property type="evidence" value="ECO:0000270"/>
    <property type="project" value="TAIR"/>
</dbReference>
<dbReference type="CDD" id="cd10233">
    <property type="entry name" value="ASKHA_NBD_HSP70_HSPA1"/>
    <property type="match status" value="1"/>
</dbReference>
<dbReference type="FunFam" id="2.60.34.10:FF:000002">
    <property type="entry name" value="Heat shock 70 kDa"/>
    <property type="match status" value="1"/>
</dbReference>
<dbReference type="FunFam" id="3.90.640.10:FF:000002">
    <property type="entry name" value="Heat shock 70 kDa"/>
    <property type="match status" value="1"/>
</dbReference>
<dbReference type="FunFam" id="1.20.1270.10:FF:000028">
    <property type="entry name" value="Heat shock 70 kDa protein"/>
    <property type="match status" value="1"/>
</dbReference>
<dbReference type="FunFam" id="3.30.420.40:FF:000172">
    <property type="entry name" value="Heat shock 70 kDa protein"/>
    <property type="match status" value="1"/>
</dbReference>
<dbReference type="FunFam" id="3.30.30.30:FF:000001">
    <property type="entry name" value="heat shock 70 kDa protein-like"/>
    <property type="match status" value="1"/>
</dbReference>
<dbReference type="FunFam" id="3.30.420.40:FF:000465">
    <property type="entry name" value="Heat shock cognate 70 kDa protein 2"/>
    <property type="match status" value="1"/>
</dbReference>
<dbReference type="FunFam" id="3.30.420.40:FF:000026">
    <property type="entry name" value="Heat shock protein 70"/>
    <property type="match status" value="1"/>
</dbReference>
<dbReference type="Gene3D" id="1.20.1270.10">
    <property type="match status" value="1"/>
</dbReference>
<dbReference type="Gene3D" id="3.30.30.30">
    <property type="match status" value="1"/>
</dbReference>
<dbReference type="Gene3D" id="3.30.420.40">
    <property type="match status" value="2"/>
</dbReference>
<dbReference type="Gene3D" id="3.90.640.10">
    <property type="entry name" value="Actin, Chain A, domain 4"/>
    <property type="match status" value="1"/>
</dbReference>
<dbReference type="Gene3D" id="2.60.34.10">
    <property type="entry name" value="Substrate Binding Domain Of DNAk, Chain A, domain 1"/>
    <property type="match status" value="1"/>
</dbReference>
<dbReference type="InterPro" id="IPR043129">
    <property type="entry name" value="ATPase_NBD"/>
</dbReference>
<dbReference type="InterPro" id="IPR018181">
    <property type="entry name" value="Heat_shock_70_CS"/>
</dbReference>
<dbReference type="InterPro" id="IPR029048">
    <property type="entry name" value="HSP70_C_sf"/>
</dbReference>
<dbReference type="InterPro" id="IPR029047">
    <property type="entry name" value="HSP70_peptide-bd_sf"/>
</dbReference>
<dbReference type="InterPro" id="IPR013126">
    <property type="entry name" value="Hsp_70_fam"/>
</dbReference>
<dbReference type="NCBIfam" id="NF001413">
    <property type="entry name" value="PRK00290.1"/>
    <property type="match status" value="1"/>
</dbReference>
<dbReference type="PANTHER" id="PTHR19375">
    <property type="entry name" value="HEAT SHOCK PROTEIN 70KDA"/>
    <property type="match status" value="1"/>
</dbReference>
<dbReference type="Pfam" id="PF00012">
    <property type="entry name" value="HSP70"/>
    <property type="match status" value="1"/>
</dbReference>
<dbReference type="PRINTS" id="PR00301">
    <property type="entry name" value="HEATSHOCK70"/>
</dbReference>
<dbReference type="SUPFAM" id="SSF53067">
    <property type="entry name" value="Actin-like ATPase domain"/>
    <property type="match status" value="2"/>
</dbReference>
<dbReference type="SUPFAM" id="SSF100934">
    <property type="entry name" value="Heat shock protein 70kD (HSP70), C-terminal subdomain"/>
    <property type="match status" value="1"/>
</dbReference>
<dbReference type="SUPFAM" id="SSF100920">
    <property type="entry name" value="Heat shock protein 70kD (HSP70), peptide-binding domain"/>
    <property type="match status" value="1"/>
</dbReference>
<dbReference type="PROSITE" id="PS00297">
    <property type="entry name" value="HSP70_1"/>
    <property type="match status" value="1"/>
</dbReference>
<dbReference type="PROSITE" id="PS00329">
    <property type="entry name" value="HSP70_2"/>
    <property type="match status" value="1"/>
</dbReference>
<dbReference type="PROSITE" id="PS01036">
    <property type="entry name" value="HSP70_3"/>
    <property type="match status" value="1"/>
</dbReference>
<keyword id="KW-0067">ATP-binding</keyword>
<keyword id="KW-0143">Chaperone</keyword>
<keyword id="KW-0963">Cytoplasm</keyword>
<keyword id="KW-0547">Nucleotide-binding</keyword>
<keyword id="KW-0539">Nucleus</keyword>
<keyword id="KW-1185">Reference proteome</keyword>
<keyword id="KW-0346">Stress response</keyword>
<keyword id="KW-0804">Transcription</keyword>
<keyword id="KW-0805">Transcription regulation</keyword>
<keyword id="KW-0833">Ubl conjugation pathway</keyword>
<gene>
    <name evidence="10" type="primary">HSP70-4</name>
    <name evidence="9" type="synonym">HSC70-4</name>
    <name type="synonym">HSP70</name>
    <name evidence="11" type="synonym">MED37_2</name>
    <name type="synonym">MED37C</name>
    <name evidence="14" type="ordered locus">At3g12580</name>
    <name evidence="16" type="ORF">T16H11.7</name>
    <name evidence="15" type="ORF">T2E22.11</name>
</gene>
<name>HS704_ARATH</name>
<comment type="function">
    <text evidence="7 13">In cooperation with other chaperones, Hsp70s are key components that facilitate folding of de novo synthesized proteins, assist translocation of precursor proteins into organelles, and are responsible for degradation of damaged protein under stress conditions (Probable). ATP-dependent molecular chaperone that assists folding of unfolded or misfolded proteins under stress conditions. Mediates plastid precursor degradation to prevent cytosolic precursor accumulation, together with the E3 ubiquitin-protein ligase CHIP. Recognizes specific sequence motifs in transit peptides and thereby led to precursor degradation through the ubiquitin-proteasome system. Plays a critical role in embryogenesis.</text>
</comment>
<comment type="function">
    <text evidence="12">In cooperation with other chaperones, Hsp70s are key components that facilitate folding of de novo synthesized proteins, assist translocation of precursor proteins into organelles, and are responsible for degradation of damaged protein under stress conditions.</text>
</comment>
<comment type="subunit">
    <text evidence="3 7">Interacts with CHIP (PubMed:20028838). Interacts with HSFA1A/HSF1 (PubMed:11807141).</text>
</comment>
<comment type="subcellular location">
    <subcellularLocation>
        <location evidence="8">Cytoplasm</location>
        <location evidence="8">Cytosol</location>
    </subcellularLocation>
    <subcellularLocation>
        <location evidence="8">Nucleus</location>
    </subcellularLocation>
</comment>
<comment type="tissue specificity">
    <text evidence="8">Expressed in cotyledons, leaves, stems, vascular bundles, roots, stigmas and anthers.</text>
</comment>
<comment type="developmental stage">
    <text evidence="2">Up-regulated during seed maturation.</text>
</comment>
<comment type="induction">
    <text evidence="2 4 5 6 8">Induced by heat shock and cold (PubMed:11402207). Induced by high light treatment and oxidative stress (PubMed:19704521). Up-regulated by viral infection (PubMed:15805473). Induced by infection with the bacterial pathogen Pseudomonas syringae (PubMed:18065690). Induced by abscisic acid (ABA), salt stress, osmotic shock, brassinosteroid, cytokinin and auxin (PubMed:28004282).</text>
</comment>
<comment type="disruption phenotype">
    <text evidence="7 8">Abnormal embryogenesis. Defective seedlings with high levels of reactive oxygen species and monoubiquitinated LHCB4 precursors (PubMed:20028838). No visible phenotype under normal growth conditions (PubMed:28004282).</text>
</comment>
<comment type="similarity">
    <text evidence="12">Belongs to the heat shock protein 70 (TC 1.A.33) family. DnaK subfamily.</text>
</comment>
<protein>
    <recommendedName>
        <fullName evidence="10">Heat shock 70 kDa protein 4</fullName>
    </recommendedName>
    <alternativeName>
        <fullName evidence="9">Heat shock cognate 70 kDa protein 4</fullName>
    </alternativeName>
    <alternativeName>
        <fullName evidence="9">Heat shock cognate protein 70-4</fullName>
        <shortName evidence="9">AtHsc70-4</shortName>
    </alternativeName>
    <alternativeName>
        <fullName evidence="10">Heat shock protein 70-4</fullName>
        <shortName evidence="10">AtHsp70-4</shortName>
    </alternativeName>
</protein>
<sequence>MAGKGEGPAIGIDLGTTYSCVGVWQHDRVEIIANDQGNRTTPSYVAFTDSERLIGDAAKNQVAMNPTNTVFDAKRLIGRRYSDPSVQADKSHWPFKVVSGPGEKPMIVVNHKGEEKQFSAEEISSMVLIKMREIAEAFLGSPVKNAVVTVPAYFNDSQRQATKDAGVISGLNVMRIINEPTAAAIAYGLDKKASSVGEKNVLIFDLGGGTFDVSLLTIEEGIFEVKATAGDTHLGGEDFDNRMVNHFVQEFKRKNKKDITGNPRALRRLRTACERAKRTLSSTAQTTIEIDSLFEGIDFYTTITRARFEELNMDLFRKCMEPVEKCLRDAKMDKSSVHDVVLVGGSTRIPKVQQLLQDFFNGKELCKSINPDEAVAYGAAVQAAILSGEGNEKVQDLLLLDVTPLSLGLETAGGVMTVLIPRNTTIPTKKEQIFSTYSDNQPGVLIQVYEGERARTKDNNLLGKFELSGIPPAPRGVPQITVCFDIDANGILNVSAEDKTTGQKNKITITNDKGRLSKEEIEKMVQEAEKYKAEDEEHKKKVDAKNALENYAYNMRNTIKDEKIASKLDAADKKKIEDAIDQAIEWLDGNQLAEADEFEDKMKELESLCNPIIARMYQGAGPDMGGAGGMDDDTPAGGSGGAGPKIEEVD</sequence>
<organism>
    <name type="scientific">Arabidopsis thaliana</name>
    <name type="common">Mouse-ear cress</name>
    <dbReference type="NCBI Taxonomy" id="3702"/>
    <lineage>
        <taxon>Eukaryota</taxon>
        <taxon>Viridiplantae</taxon>
        <taxon>Streptophyta</taxon>
        <taxon>Embryophyta</taxon>
        <taxon>Tracheophyta</taxon>
        <taxon>Spermatophyta</taxon>
        <taxon>Magnoliopsida</taxon>
        <taxon>eudicotyledons</taxon>
        <taxon>Gunneridae</taxon>
        <taxon>Pentapetalae</taxon>
        <taxon>rosids</taxon>
        <taxon>malvids</taxon>
        <taxon>Brassicales</taxon>
        <taxon>Brassicaceae</taxon>
        <taxon>Camelineae</taxon>
        <taxon>Arabidopsis</taxon>
    </lineage>
</organism>
<proteinExistence type="evidence at protein level"/>
<feature type="chain" id="PRO_0000397045" description="Heat shock 70 kDa protein 4">
    <location>
        <begin position="1"/>
        <end position="650"/>
    </location>
</feature>
<feature type="region of interest" description="Disordered" evidence="1">
    <location>
        <begin position="620"/>
        <end position="650"/>
    </location>
</feature>
<feature type="sequence conflict" description="In Ref. 1; CAA05547." evidence="12" ref="1">
    <original>M</original>
    <variation>I</variation>
    <location>
        <position position="126"/>
    </location>
</feature>
<feature type="sequence conflict" description="In Ref. 1; CAA05547." evidence="12" ref="1">
    <original>T</original>
    <variation>I</variation>
    <location>
        <position position="149"/>
    </location>
</feature>
<feature type="sequence conflict" description="In Ref. 1; CAA05547." evidence="12" ref="1">
    <original>A</original>
    <variation>G</variation>
    <location>
        <position position="161"/>
    </location>
</feature>
<feature type="sequence conflict" description="In Ref. 1; CAA05547." evidence="12" ref="1">
    <original>L</original>
    <variation>V</variation>
    <location>
        <position position="342"/>
    </location>
</feature>
<feature type="sequence conflict" description="In Ref. 1; CAA05547." evidence="12" ref="1">
    <original>L</original>
    <variation>V</variation>
    <location>
        <position position="356"/>
    </location>
</feature>
<reference key="1">
    <citation type="submission" date="1998-12" db="EMBL/GenBank/DDBJ databases">
        <title>Seed-maturation-induced subset of heat shock protein mRNAs and heat-shock-element-binding protein complexes are dependent on ABI3 in Arabidopsis thaliana.</title>
        <authorList>
            <person name="Hinderhofer K."/>
            <person name="Praendl R."/>
            <person name="Schoeffl F."/>
        </authorList>
    </citation>
    <scope>NUCLEOTIDE SEQUENCE [MRNA]</scope>
    <source>
        <strain>cv. Columbia</strain>
        <tissue>Silique</tissue>
    </source>
</reference>
<reference key="2">
    <citation type="journal article" date="2000" name="DNA Res.">
        <title>Structural analysis of Arabidopsis thaliana chromosome 3. II. Sequence features of the 4,251,695 bp regions covered by 90 P1, TAC and BAC clones.</title>
        <authorList>
            <person name="Kaneko T."/>
            <person name="Katoh T."/>
            <person name="Sato S."/>
            <person name="Nakamura Y."/>
            <person name="Asamizu E."/>
            <person name="Tabata S."/>
        </authorList>
    </citation>
    <scope>NUCLEOTIDE SEQUENCE [LARGE SCALE GENOMIC DNA]</scope>
    <source>
        <strain>cv. Columbia</strain>
    </source>
</reference>
<reference key="3">
    <citation type="journal article" date="2000" name="Nature">
        <title>Sequence and analysis of chromosome 3 of the plant Arabidopsis thaliana.</title>
        <authorList>
            <person name="Salanoubat M."/>
            <person name="Lemcke K."/>
            <person name="Rieger M."/>
            <person name="Ansorge W."/>
            <person name="Unseld M."/>
            <person name="Fartmann B."/>
            <person name="Valle G."/>
            <person name="Bloecker H."/>
            <person name="Perez-Alonso M."/>
            <person name="Obermaier B."/>
            <person name="Delseny M."/>
            <person name="Boutry M."/>
            <person name="Grivell L.A."/>
            <person name="Mache R."/>
            <person name="Puigdomenech P."/>
            <person name="De Simone V."/>
            <person name="Choisne N."/>
            <person name="Artiguenave F."/>
            <person name="Robert C."/>
            <person name="Brottier P."/>
            <person name="Wincker P."/>
            <person name="Cattolico L."/>
            <person name="Weissenbach J."/>
            <person name="Saurin W."/>
            <person name="Quetier F."/>
            <person name="Schaefer M."/>
            <person name="Mueller-Auer S."/>
            <person name="Gabel C."/>
            <person name="Fuchs M."/>
            <person name="Benes V."/>
            <person name="Wurmbach E."/>
            <person name="Drzonek H."/>
            <person name="Erfle H."/>
            <person name="Jordan N."/>
            <person name="Bangert S."/>
            <person name="Wiedelmann R."/>
            <person name="Kranz H."/>
            <person name="Voss H."/>
            <person name="Holland R."/>
            <person name="Brandt P."/>
            <person name="Nyakatura G."/>
            <person name="Vezzi A."/>
            <person name="D'Angelo M."/>
            <person name="Pallavicini A."/>
            <person name="Toppo S."/>
            <person name="Simionati B."/>
            <person name="Conrad A."/>
            <person name="Hornischer K."/>
            <person name="Kauer G."/>
            <person name="Loehnert T.-H."/>
            <person name="Nordsiek G."/>
            <person name="Reichelt J."/>
            <person name="Scharfe M."/>
            <person name="Schoen O."/>
            <person name="Bargues M."/>
            <person name="Terol J."/>
            <person name="Climent J."/>
            <person name="Navarro P."/>
            <person name="Collado C."/>
            <person name="Perez-Perez A."/>
            <person name="Ottenwaelder B."/>
            <person name="Duchemin D."/>
            <person name="Cooke R."/>
            <person name="Laudie M."/>
            <person name="Berger-Llauro C."/>
            <person name="Purnelle B."/>
            <person name="Masuy D."/>
            <person name="de Haan M."/>
            <person name="Maarse A.C."/>
            <person name="Alcaraz J.-P."/>
            <person name="Cottet A."/>
            <person name="Casacuberta E."/>
            <person name="Monfort A."/>
            <person name="Argiriou A."/>
            <person name="Flores M."/>
            <person name="Liguori R."/>
            <person name="Vitale D."/>
            <person name="Mannhaupt G."/>
            <person name="Haase D."/>
            <person name="Schoof H."/>
            <person name="Rudd S."/>
            <person name="Zaccaria P."/>
            <person name="Mewes H.-W."/>
            <person name="Mayer K.F.X."/>
            <person name="Kaul S."/>
            <person name="Town C.D."/>
            <person name="Koo H.L."/>
            <person name="Tallon L.J."/>
            <person name="Jenkins J."/>
            <person name="Rooney T."/>
            <person name="Rizzo M."/>
            <person name="Walts A."/>
            <person name="Utterback T."/>
            <person name="Fujii C.Y."/>
            <person name="Shea T.P."/>
            <person name="Creasy T.H."/>
            <person name="Haas B."/>
            <person name="Maiti R."/>
            <person name="Wu D."/>
            <person name="Peterson J."/>
            <person name="Van Aken S."/>
            <person name="Pai G."/>
            <person name="Militscher J."/>
            <person name="Sellers P."/>
            <person name="Gill J.E."/>
            <person name="Feldblyum T.V."/>
            <person name="Preuss D."/>
            <person name="Lin X."/>
            <person name="Nierman W.C."/>
            <person name="Salzberg S.L."/>
            <person name="White O."/>
            <person name="Venter J.C."/>
            <person name="Fraser C.M."/>
            <person name="Kaneko T."/>
            <person name="Nakamura Y."/>
            <person name="Sato S."/>
            <person name="Kato T."/>
            <person name="Asamizu E."/>
            <person name="Sasamoto S."/>
            <person name="Kimura T."/>
            <person name="Idesawa K."/>
            <person name="Kawashima K."/>
            <person name="Kishida Y."/>
            <person name="Kiyokawa C."/>
            <person name="Kohara M."/>
            <person name="Matsumoto M."/>
            <person name="Matsuno A."/>
            <person name="Muraki A."/>
            <person name="Nakayama S."/>
            <person name="Nakazaki N."/>
            <person name="Shinpo S."/>
            <person name="Takeuchi C."/>
            <person name="Wada T."/>
            <person name="Watanabe A."/>
            <person name="Yamada M."/>
            <person name="Yasuda M."/>
            <person name="Tabata S."/>
        </authorList>
    </citation>
    <scope>NUCLEOTIDE SEQUENCE [LARGE SCALE GENOMIC DNA]</scope>
    <source>
        <strain>cv. Columbia</strain>
    </source>
</reference>
<reference key="4">
    <citation type="journal article" date="2017" name="Plant J.">
        <title>Araport11: a complete reannotation of the Arabidopsis thaliana reference genome.</title>
        <authorList>
            <person name="Cheng C.Y."/>
            <person name="Krishnakumar V."/>
            <person name="Chan A.P."/>
            <person name="Thibaud-Nissen F."/>
            <person name="Schobel S."/>
            <person name="Town C.D."/>
        </authorList>
    </citation>
    <scope>GENOME REANNOTATION</scope>
    <source>
        <strain>cv. Columbia</strain>
    </source>
</reference>
<reference key="5">
    <citation type="journal article" date="2003" name="Science">
        <title>Empirical analysis of transcriptional activity in the Arabidopsis genome.</title>
        <authorList>
            <person name="Yamada K."/>
            <person name="Lim J."/>
            <person name="Dale J.M."/>
            <person name="Chen H."/>
            <person name="Shinn P."/>
            <person name="Palm C.J."/>
            <person name="Southwick A.M."/>
            <person name="Wu H.C."/>
            <person name="Kim C.J."/>
            <person name="Nguyen M."/>
            <person name="Pham P.K."/>
            <person name="Cheuk R.F."/>
            <person name="Karlin-Newmann G."/>
            <person name="Liu S.X."/>
            <person name="Lam B."/>
            <person name="Sakano H."/>
            <person name="Wu T."/>
            <person name="Yu G."/>
            <person name="Miranda M."/>
            <person name="Quach H.L."/>
            <person name="Tripp M."/>
            <person name="Chang C.H."/>
            <person name="Lee J.M."/>
            <person name="Toriumi M.J."/>
            <person name="Chan M.M."/>
            <person name="Tang C.C."/>
            <person name="Onodera C.S."/>
            <person name="Deng J.M."/>
            <person name="Akiyama K."/>
            <person name="Ansari Y."/>
            <person name="Arakawa T."/>
            <person name="Banh J."/>
            <person name="Banno F."/>
            <person name="Bowser L."/>
            <person name="Brooks S.Y."/>
            <person name="Carninci P."/>
            <person name="Chao Q."/>
            <person name="Choy N."/>
            <person name="Enju A."/>
            <person name="Goldsmith A.D."/>
            <person name="Gurjal M."/>
            <person name="Hansen N.F."/>
            <person name="Hayashizaki Y."/>
            <person name="Johnson-Hopson C."/>
            <person name="Hsuan V.W."/>
            <person name="Iida K."/>
            <person name="Karnes M."/>
            <person name="Khan S."/>
            <person name="Koesema E."/>
            <person name="Ishida J."/>
            <person name="Jiang P.X."/>
            <person name="Jones T."/>
            <person name="Kawai J."/>
            <person name="Kamiya A."/>
            <person name="Meyers C."/>
            <person name="Nakajima M."/>
            <person name="Narusaka M."/>
            <person name="Seki M."/>
            <person name="Sakurai T."/>
            <person name="Satou M."/>
            <person name="Tamse R."/>
            <person name="Vaysberg M."/>
            <person name="Wallender E.K."/>
            <person name="Wong C."/>
            <person name="Yamamura Y."/>
            <person name="Yuan S."/>
            <person name="Shinozaki K."/>
            <person name="Davis R.W."/>
            <person name="Theologis A."/>
            <person name="Ecker J.R."/>
        </authorList>
    </citation>
    <scope>NUCLEOTIDE SEQUENCE [LARGE SCALE MRNA]</scope>
    <source>
        <strain>cv. Columbia</strain>
    </source>
</reference>
<reference key="6">
    <citation type="journal article" date="2001" name="Cell Stress Chaperones">
        <title>Genomic analysis of the Hsp70 superfamily in Arabidopsis thaliana.</title>
        <authorList>
            <person name="Lin B.L."/>
            <person name="Wang J.S."/>
            <person name="Liu H.C."/>
            <person name="Chen R.W."/>
            <person name="Meyer Y."/>
            <person name="Barakat A."/>
            <person name="Delseny M."/>
        </authorList>
    </citation>
    <scope>GENE FAMILY</scope>
    <scope>NOMENCLATURE</scope>
</reference>
<reference key="7">
    <citation type="journal article" date="2001" name="Plant Physiol.">
        <title>Comprehensive expression profile analysis of the Arabidopsis Hsp70 gene family.</title>
        <authorList>
            <person name="Sung D.Y."/>
            <person name="Vierling E."/>
            <person name="Guy C.L."/>
        </authorList>
    </citation>
    <scope>DNAK GENE SUBFAMILY</scope>
    <scope>INDUCTION</scope>
    <scope>DEVELOPMENTAL STAGE</scope>
</reference>
<reference key="8">
    <citation type="journal article" date="2002" name="J. Exp. Bot.">
        <title>Interaction between Arabidopsis heat shock transcription factor 1 and 70 kDa heat shock proteins.</title>
        <authorList>
            <person name="Kim B.H."/>
            <person name="Schoeffl F."/>
        </authorList>
    </citation>
    <scope>INTERACTION WITH HSFA1A/HSF1</scope>
</reference>
<reference key="9">
    <citation type="journal article" date="2005" name="Plant Physiol.">
        <title>Virus induction of heat shock protein 70 reflects a general response to protein accumulation in the plant cytosol.</title>
        <authorList>
            <person name="Aparicio F."/>
            <person name="Thomas C.L."/>
            <person name="Lederer C."/>
            <person name="Niu Y."/>
            <person name="Wang D."/>
            <person name="Maule A.J."/>
        </authorList>
    </citation>
    <scope>INDUCTION</scope>
</reference>
<reference key="10">
    <citation type="journal article" date="2007" name="Mol. Cell. Proteomics">
        <title>Multidimensional protein identification technology (MudPIT) analysis of ubiquitinated proteins in plants.</title>
        <authorList>
            <person name="Maor R."/>
            <person name="Jones A."/>
            <person name="Nuehse T.S."/>
            <person name="Studholme D.J."/>
            <person name="Peck S.C."/>
            <person name="Shirasu K."/>
        </authorList>
    </citation>
    <scope>IDENTIFICATION BY MASS SPECTROMETRY [LARGE SCALE ANALYSIS]</scope>
    <source>
        <strain>cv. Landsberg erecta</strain>
    </source>
</reference>
<reference key="11">
    <citation type="journal article" date="2007" name="Plant Cell">
        <title>Interaction between SGT1 and cytosolic/nuclear HSC70 chaperones regulates Arabidopsis immune responses.</title>
        <authorList>
            <person name="Noel L.D."/>
            <person name="Cagna G."/>
            <person name="Stuttmann J."/>
            <person name="Wirthmueller L."/>
            <person name="Betsuyaku S."/>
            <person name="Witte C.P."/>
            <person name="Bhat R."/>
            <person name="Pochon N."/>
            <person name="Colby T."/>
            <person name="Parker J.E."/>
        </authorList>
    </citation>
    <scope>INDUCTION BY PATHOGEN</scope>
</reference>
<reference key="12">
    <citation type="journal article" date="2008" name="Plant Signal. Behav.">
        <title>Investigating the role of plant heat shock proteins during oxidative stress.</title>
        <authorList>
            <person name="Scarpeci T.E."/>
            <person name="Zanor M.I."/>
            <person name="Valle E.M."/>
        </authorList>
    </citation>
    <scope>INDUCTION</scope>
</reference>
<reference key="13">
    <citation type="journal article" date="2009" name="Plant Cell">
        <title>Heat shock protein cognate 70-4 and an E3 ubiquitin ligase, CHIP, mediate plastid-destined precursor degradation through the ubiquitin-26S proteasome system in Arabidopsis.</title>
        <authorList>
            <person name="Lee S."/>
            <person name="Lee D.W."/>
            <person name="Lee Y."/>
            <person name="Mayer U."/>
            <person name="Stierhof Y.D."/>
            <person name="Lee S."/>
            <person name="Jurgens G."/>
            <person name="Hwang I."/>
        </authorList>
    </citation>
    <scope>FUNCTION</scope>
    <scope>INTERACTION WITH CHIP</scope>
    <scope>DISRUPTION PHENOTYPE</scope>
</reference>
<reference key="14">
    <citation type="journal article" date="2011" name="Plant Physiol.">
        <title>The Mediator complex in plants: structure, phylogeny, and expression profiling of representative genes in a dicot (Arabidopsis) and a monocot (rice) during reproduction and abiotic stress.</title>
        <authorList>
            <person name="Mathur S."/>
            <person name="Vyas S."/>
            <person name="Kapoor S."/>
            <person name="Tyagi A.K."/>
        </authorList>
    </citation>
    <scope>NOMENCLATURE</scope>
</reference>
<reference key="15">
    <citation type="journal article" date="2017" name="J. Plant Res.">
        <title>A subclass of HSP70s regulate development and abiotic stress responses in Arabidopsis thaliana.</title>
        <authorList>
            <person name="Leng L."/>
            <person name="Liang Q."/>
            <person name="Jiang J."/>
            <person name="Zhang C."/>
            <person name="Hao Y."/>
            <person name="Wang X."/>
            <person name="Su W."/>
        </authorList>
    </citation>
    <scope>SUBCELLULAR LOCATION</scope>
    <scope>TISSUE SPECIFICITY</scope>
    <scope>INDUCTION</scope>
    <scope>DISRUPTION PHENOTYPE</scope>
</reference>
<accession>Q9LHA8</accession>
<accession>Q9ZS55</accession>
<evidence type="ECO:0000256" key="1">
    <source>
        <dbReference type="SAM" id="MobiDB-lite"/>
    </source>
</evidence>
<evidence type="ECO:0000269" key="2">
    <source>
    </source>
</evidence>
<evidence type="ECO:0000269" key="3">
    <source>
    </source>
</evidence>
<evidence type="ECO:0000269" key="4">
    <source>
    </source>
</evidence>
<evidence type="ECO:0000269" key="5">
    <source>
    </source>
</evidence>
<evidence type="ECO:0000269" key="6">
    <source>
    </source>
</evidence>
<evidence type="ECO:0000269" key="7">
    <source>
    </source>
</evidence>
<evidence type="ECO:0000269" key="8">
    <source>
    </source>
</evidence>
<evidence type="ECO:0000303" key="9">
    <source>
    </source>
</evidence>
<evidence type="ECO:0000303" key="10">
    <source>
    </source>
</evidence>
<evidence type="ECO:0000303" key="11">
    <source>
    </source>
</evidence>
<evidence type="ECO:0000305" key="12"/>
<evidence type="ECO:0000305" key="13">
    <source>
    </source>
</evidence>
<evidence type="ECO:0000312" key="14">
    <source>
        <dbReference type="Araport" id="AT3G12580"/>
    </source>
</evidence>
<evidence type="ECO:0000312" key="15">
    <source>
        <dbReference type="EMBL" id="AAG51030.1"/>
    </source>
</evidence>
<evidence type="ECO:0000312" key="16">
    <source>
        <dbReference type="EMBL" id="BAB02269.1"/>
    </source>
</evidence>